<dbReference type="EC" id="7.6.2.11" evidence="1"/>
<dbReference type="EMBL" id="AE016825">
    <property type="protein sequence ID" value="AAQ61763.2"/>
    <property type="molecule type" value="Genomic_DNA"/>
</dbReference>
<dbReference type="RefSeq" id="WP_011137649.1">
    <property type="nucleotide sequence ID" value="NC_005085.1"/>
</dbReference>
<dbReference type="SMR" id="Q7NQN5"/>
<dbReference type="STRING" id="243365.CV_4102"/>
<dbReference type="KEGG" id="cvi:CV_4102"/>
<dbReference type="eggNOG" id="COG3842">
    <property type="taxonomic scope" value="Bacteria"/>
</dbReference>
<dbReference type="HOGENOM" id="CLU_000604_1_1_4"/>
<dbReference type="OrthoDB" id="5298774at2"/>
<dbReference type="Proteomes" id="UP000001424">
    <property type="component" value="Chromosome"/>
</dbReference>
<dbReference type="GO" id="GO:0043190">
    <property type="term" value="C:ATP-binding cassette (ABC) transporter complex"/>
    <property type="evidence" value="ECO:0007669"/>
    <property type="project" value="InterPro"/>
</dbReference>
<dbReference type="GO" id="GO:0015417">
    <property type="term" value="F:ABC-type polyamine transporter activity"/>
    <property type="evidence" value="ECO:0007669"/>
    <property type="project" value="UniProtKB-EC"/>
</dbReference>
<dbReference type="GO" id="GO:0005524">
    <property type="term" value="F:ATP binding"/>
    <property type="evidence" value="ECO:0007669"/>
    <property type="project" value="UniProtKB-KW"/>
</dbReference>
<dbReference type="GO" id="GO:0016887">
    <property type="term" value="F:ATP hydrolysis activity"/>
    <property type="evidence" value="ECO:0007669"/>
    <property type="project" value="InterPro"/>
</dbReference>
<dbReference type="FunFam" id="3.40.50.300:FF:000133">
    <property type="entry name" value="Spermidine/putrescine import ATP-binding protein PotA"/>
    <property type="match status" value="1"/>
</dbReference>
<dbReference type="Gene3D" id="2.40.50.100">
    <property type="match status" value="1"/>
</dbReference>
<dbReference type="Gene3D" id="3.40.50.300">
    <property type="entry name" value="P-loop containing nucleotide triphosphate hydrolases"/>
    <property type="match status" value="1"/>
</dbReference>
<dbReference type="InterPro" id="IPR003593">
    <property type="entry name" value="AAA+_ATPase"/>
</dbReference>
<dbReference type="InterPro" id="IPR050093">
    <property type="entry name" value="ABC_SmlMolc_Importer"/>
</dbReference>
<dbReference type="InterPro" id="IPR003439">
    <property type="entry name" value="ABC_transporter-like_ATP-bd"/>
</dbReference>
<dbReference type="InterPro" id="IPR017871">
    <property type="entry name" value="ABC_transporter-like_CS"/>
</dbReference>
<dbReference type="InterPro" id="IPR008995">
    <property type="entry name" value="Mo/tungstate-bd_C_term_dom"/>
</dbReference>
<dbReference type="InterPro" id="IPR027417">
    <property type="entry name" value="P-loop_NTPase"/>
</dbReference>
<dbReference type="InterPro" id="IPR005893">
    <property type="entry name" value="PotA-like"/>
</dbReference>
<dbReference type="InterPro" id="IPR013611">
    <property type="entry name" value="Transp-assoc_OB_typ2"/>
</dbReference>
<dbReference type="NCBIfam" id="TIGR01187">
    <property type="entry name" value="potA"/>
    <property type="match status" value="1"/>
</dbReference>
<dbReference type="PANTHER" id="PTHR42781">
    <property type="entry name" value="SPERMIDINE/PUTRESCINE IMPORT ATP-BINDING PROTEIN POTA"/>
    <property type="match status" value="1"/>
</dbReference>
<dbReference type="PANTHER" id="PTHR42781:SF4">
    <property type="entry name" value="SPERMIDINE_PUTRESCINE IMPORT ATP-BINDING PROTEIN POTA"/>
    <property type="match status" value="1"/>
</dbReference>
<dbReference type="Pfam" id="PF00005">
    <property type="entry name" value="ABC_tran"/>
    <property type="match status" value="1"/>
</dbReference>
<dbReference type="Pfam" id="PF08402">
    <property type="entry name" value="TOBE_2"/>
    <property type="match status" value="1"/>
</dbReference>
<dbReference type="SMART" id="SM00382">
    <property type="entry name" value="AAA"/>
    <property type="match status" value="1"/>
</dbReference>
<dbReference type="SUPFAM" id="SSF50331">
    <property type="entry name" value="MOP-like"/>
    <property type="match status" value="1"/>
</dbReference>
<dbReference type="SUPFAM" id="SSF52540">
    <property type="entry name" value="P-loop containing nucleoside triphosphate hydrolases"/>
    <property type="match status" value="1"/>
</dbReference>
<dbReference type="PROSITE" id="PS00211">
    <property type="entry name" value="ABC_TRANSPORTER_1"/>
    <property type="match status" value="1"/>
</dbReference>
<dbReference type="PROSITE" id="PS50893">
    <property type="entry name" value="ABC_TRANSPORTER_2"/>
    <property type="match status" value="1"/>
</dbReference>
<dbReference type="PROSITE" id="PS51305">
    <property type="entry name" value="POTA"/>
    <property type="match status" value="1"/>
</dbReference>
<gene>
    <name evidence="1" type="primary">potA</name>
    <name type="ordered locus">CV_4102</name>
</gene>
<reference key="1">
    <citation type="journal article" date="2003" name="Proc. Natl. Acad. Sci. U.S.A.">
        <title>The complete genome sequence of Chromobacterium violaceum reveals remarkable and exploitable bacterial adaptability.</title>
        <authorList>
            <person name="Vasconcelos A.T.R."/>
            <person name="de Almeida D.F."/>
            <person name="Hungria M."/>
            <person name="Guimaraes C.T."/>
            <person name="Antonio R.V."/>
            <person name="Almeida F.C."/>
            <person name="de Almeida L.G.P."/>
            <person name="de Almeida R."/>
            <person name="Alves-Gomes J.A."/>
            <person name="Andrade E.M."/>
            <person name="Araripe J."/>
            <person name="de Araujo M.F.F."/>
            <person name="Astolfi-Filho S."/>
            <person name="Azevedo V."/>
            <person name="Baptista A.J."/>
            <person name="Bataus L.A.M."/>
            <person name="Batista J.S."/>
            <person name="Belo A."/>
            <person name="van den Berg C."/>
            <person name="Bogo M."/>
            <person name="Bonatto S."/>
            <person name="Bordignon J."/>
            <person name="Brigido M.M."/>
            <person name="Brito C.A."/>
            <person name="Brocchi M."/>
            <person name="Burity H.A."/>
            <person name="Camargo A.A."/>
            <person name="Cardoso D.D.P."/>
            <person name="Carneiro N.P."/>
            <person name="Carraro D.M."/>
            <person name="Carvalho C.M.B."/>
            <person name="Cascardo J.C.M."/>
            <person name="Cavada B.S."/>
            <person name="Chueire L.M.O."/>
            <person name="Creczynski-Pasa T.B."/>
            <person name="Cunha-Junior N.C."/>
            <person name="Fagundes N."/>
            <person name="Falcao C.L."/>
            <person name="Fantinatti F."/>
            <person name="Farias I.P."/>
            <person name="Felipe M.S.S."/>
            <person name="Ferrari L.P."/>
            <person name="Ferro J.A."/>
            <person name="Ferro M.I.T."/>
            <person name="Franco G.R."/>
            <person name="Freitas N.S.A."/>
            <person name="Furlan L.R."/>
            <person name="Gazzinelli R.T."/>
            <person name="Gomes E.A."/>
            <person name="Goncalves P.R."/>
            <person name="Grangeiro T.B."/>
            <person name="Grattapaglia D."/>
            <person name="Grisard E.C."/>
            <person name="Hanna E.S."/>
            <person name="Jardim S.N."/>
            <person name="Laurino J."/>
            <person name="Leoi L.C.T."/>
            <person name="Lima L.F.A."/>
            <person name="Loureiro M.F."/>
            <person name="Lyra M.C.C.P."/>
            <person name="Madeira H.M.F."/>
            <person name="Manfio G.P."/>
            <person name="Maranhao A.Q."/>
            <person name="Martins W.S."/>
            <person name="di Mauro S.M.Z."/>
            <person name="de Medeiros S.R.B."/>
            <person name="Meissner R.V."/>
            <person name="Moreira M.A.M."/>
            <person name="Nascimento F.F."/>
            <person name="Nicolas M.F."/>
            <person name="Oliveira J.G."/>
            <person name="Oliveira S.C."/>
            <person name="Paixao R.F.C."/>
            <person name="Parente J.A."/>
            <person name="Pedrosa F.O."/>
            <person name="Pena S.D.J."/>
            <person name="Pereira J.O."/>
            <person name="Pereira M."/>
            <person name="Pinto L.S.R.C."/>
            <person name="Pinto L.S."/>
            <person name="Porto J.I.R."/>
            <person name="Potrich D.P."/>
            <person name="Ramalho-Neto C.E."/>
            <person name="Reis A.M.M."/>
            <person name="Rigo L.U."/>
            <person name="Rondinelli E."/>
            <person name="Santos E.B.P."/>
            <person name="Santos F.R."/>
            <person name="Schneider M.P.C."/>
            <person name="Seuanez H.N."/>
            <person name="Silva A.M.R."/>
            <person name="da Silva A.L.C."/>
            <person name="Silva D.W."/>
            <person name="Silva R."/>
            <person name="Simoes I.C."/>
            <person name="Simon D."/>
            <person name="Soares C.M.A."/>
            <person name="Soares R.B.A."/>
            <person name="Souza E.M."/>
            <person name="Souza K.R.L."/>
            <person name="Souza R.C."/>
            <person name="Steffens M.B.R."/>
            <person name="Steindel M."/>
            <person name="Teixeira S.R."/>
            <person name="Urmenyi T."/>
            <person name="Vettore A."/>
            <person name="Wassem R."/>
            <person name="Zaha A."/>
            <person name="Simpson A.J.G."/>
        </authorList>
    </citation>
    <scope>NUCLEOTIDE SEQUENCE [LARGE SCALE GENOMIC DNA]</scope>
    <source>
        <strain>ATCC 12472 / DSM 30191 / JCM 1249 / CCUG 213 / NBRC 12614 / NCIMB 9131 / NCTC 9757 / MK</strain>
    </source>
</reference>
<accession>Q7NQN5</accession>
<keyword id="KW-0067">ATP-binding</keyword>
<keyword id="KW-0997">Cell inner membrane</keyword>
<keyword id="KW-1003">Cell membrane</keyword>
<keyword id="KW-0472">Membrane</keyword>
<keyword id="KW-0547">Nucleotide-binding</keyword>
<keyword id="KW-1185">Reference proteome</keyword>
<keyword id="KW-1278">Translocase</keyword>
<keyword id="KW-0813">Transport</keyword>
<evidence type="ECO:0000255" key="1">
    <source>
        <dbReference type="HAMAP-Rule" id="MF_01726"/>
    </source>
</evidence>
<sequence length="361" mass="40086">MALLEIKNVVKRFGDYTAVNDVSLSVEAGEFFTLPGPSGCGKTTLLRMLAGFEQPDAGQILLDGQDMSQVAPEKRPVHTVFQSYALFPHMTVRENIAFPLKMAKWDKRKIAAQVDELLEDVRLTQFGDRYPHEMSGGQRQRVAIARALVDRPRLLLLDEPLSALDAKLREEMQIELINLQKEVGITFVYVTHDQGEALALSHRIAVMSHGKVEQLDAPEKLYSYPKNRFVADFLGQCNVLEGTVKALHGDAMTVALKGCGDVKCQAVAGVKEGQQGWLALRPEKVKLDKELPELPDEAYFKGRVHDCLYLGDVTLYVVEVADGVLVEAMQPNNIPGVAKFFDDGDVVEIAWRFDAGSFLTE</sequence>
<feature type="chain" id="PRO_0000286203" description="Spermidine/putrescine import ATP-binding protein PotA">
    <location>
        <begin position="1"/>
        <end position="361"/>
    </location>
</feature>
<feature type="domain" description="ABC transporter" evidence="1">
    <location>
        <begin position="4"/>
        <end position="234"/>
    </location>
</feature>
<feature type="binding site" evidence="1">
    <location>
        <begin position="36"/>
        <end position="43"/>
    </location>
    <ligand>
        <name>ATP</name>
        <dbReference type="ChEBI" id="CHEBI:30616"/>
    </ligand>
</feature>
<organism>
    <name type="scientific">Chromobacterium violaceum (strain ATCC 12472 / DSM 30191 / JCM 1249 / CCUG 213 / NBRC 12614 / NCIMB 9131 / NCTC 9757 / MK)</name>
    <dbReference type="NCBI Taxonomy" id="243365"/>
    <lineage>
        <taxon>Bacteria</taxon>
        <taxon>Pseudomonadati</taxon>
        <taxon>Pseudomonadota</taxon>
        <taxon>Betaproteobacteria</taxon>
        <taxon>Neisseriales</taxon>
        <taxon>Chromobacteriaceae</taxon>
        <taxon>Chromobacterium</taxon>
    </lineage>
</organism>
<name>POTA_CHRVO</name>
<comment type="function">
    <text evidence="1">Part of the ABC transporter complex PotABCD involved in spermidine/putrescine import. Responsible for energy coupling to the transport system.</text>
</comment>
<comment type="catalytic activity">
    <reaction evidence="1">
        <text>ATP + H2O + polyamine-[polyamine-binding protein]Side 1 = ADP + phosphate + polyamineSide 2 + [polyamine-binding protein]Side 1.</text>
        <dbReference type="EC" id="7.6.2.11"/>
    </reaction>
</comment>
<comment type="subunit">
    <text evidence="1">The complex is composed of two ATP-binding proteins (PotA), two transmembrane proteins (PotB and PotC) and a solute-binding protein (PotD).</text>
</comment>
<comment type="subcellular location">
    <subcellularLocation>
        <location evidence="1">Cell inner membrane</location>
        <topology evidence="1">Peripheral membrane protein</topology>
    </subcellularLocation>
</comment>
<comment type="similarity">
    <text evidence="1">Belongs to the ABC transporter superfamily. Spermidine/putrescine importer (TC 3.A.1.11.1) family.</text>
</comment>
<protein>
    <recommendedName>
        <fullName evidence="1">Spermidine/putrescine import ATP-binding protein PotA</fullName>
        <ecNumber evidence="1">7.6.2.11</ecNumber>
    </recommendedName>
</protein>
<proteinExistence type="inferred from homology"/>